<proteinExistence type="inferred from homology"/>
<comment type="subcellular location">
    <subcellularLocation>
        <location evidence="1">Cell membrane</location>
        <topology evidence="1">Multi-pass membrane protein</topology>
    </subcellularLocation>
</comment>
<comment type="similarity">
    <text evidence="1">Belongs to the UPF0397 family.</text>
</comment>
<gene>
    <name type="ordered locus">str0306</name>
</gene>
<keyword id="KW-1003">Cell membrane</keyword>
<keyword id="KW-0472">Membrane</keyword>
<keyword id="KW-0812">Transmembrane</keyword>
<keyword id="KW-1133">Transmembrane helix</keyword>
<name>Y306_STRT1</name>
<protein>
    <recommendedName>
        <fullName evidence="1">UPF0397 protein str0306</fullName>
    </recommendedName>
</protein>
<evidence type="ECO:0000255" key="1">
    <source>
        <dbReference type="HAMAP-Rule" id="MF_01572"/>
    </source>
</evidence>
<reference key="1">
    <citation type="journal article" date="2004" name="Nat. Biotechnol.">
        <title>Complete sequence and comparative genome analysis of the dairy bacterium Streptococcus thermophilus.</title>
        <authorList>
            <person name="Bolotin A."/>
            <person name="Quinquis B."/>
            <person name="Renault P."/>
            <person name="Sorokin A."/>
            <person name="Ehrlich S.D."/>
            <person name="Kulakauskas S."/>
            <person name="Lapidus A."/>
            <person name="Goltsman E."/>
            <person name="Mazur M."/>
            <person name="Pusch G.D."/>
            <person name="Fonstein M."/>
            <person name="Overbeek R."/>
            <person name="Kyprides N."/>
            <person name="Purnelle B."/>
            <person name="Prozzi D."/>
            <person name="Ngui K."/>
            <person name="Masuy D."/>
            <person name="Hancy F."/>
            <person name="Burteau S."/>
            <person name="Boutry M."/>
            <person name="Delcour J."/>
            <person name="Goffeau A."/>
            <person name="Hols P."/>
        </authorList>
    </citation>
    <scope>NUCLEOTIDE SEQUENCE [LARGE SCALE GENOMIC DNA]</scope>
    <source>
        <strain>CNRZ 1066</strain>
    </source>
</reference>
<dbReference type="EMBL" id="CP000024">
    <property type="protein sequence ID" value="AAV61912.1"/>
    <property type="molecule type" value="Genomic_DNA"/>
</dbReference>
<dbReference type="RefSeq" id="WP_002946071.1">
    <property type="nucleotide sequence ID" value="NC_006449.1"/>
</dbReference>
<dbReference type="KEGG" id="stc:str0306"/>
<dbReference type="HOGENOM" id="CLU_120023_0_0_9"/>
<dbReference type="GO" id="GO:0005886">
    <property type="term" value="C:plasma membrane"/>
    <property type="evidence" value="ECO:0007669"/>
    <property type="project" value="UniProtKB-SubCell"/>
</dbReference>
<dbReference type="Gene3D" id="1.10.1760.20">
    <property type="match status" value="1"/>
</dbReference>
<dbReference type="HAMAP" id="MF_01572">
    <property type="entry name" value="UPF0397"/>
    <property type="match status" value="1"/>
</dbReference>
<dbReference type="InterPro" id="IPR009825">
    <property type="entry name" value="ECF_substrate-spec-like"/>
</dbReference>
<dbReference type="InterPro" id="IPR022914">
    <property type="entry name" value="UPF0397"/>
</dbReference>
<dbReference type="NCBIfam" id="NF010182">
    <property type="entry name" value="PRK13661.1"/>
    <property type="match status" value="1"/>
</dbReference>
<dbReference type="PANTHER" id="PTHR37815">
    <property type="entry name" value="UPF0397 PROTEIN BC_2624-RELATED"/>
    <property type="match status" value="1"/>
</dbReference>
<dbReference type="PANTHER" id="PTHR37815:SF3">
    <property type="entry name" value="UPF0397 PROTEIN SPR0429"/>
    <property type="match status" value="1"/>
</dbReference>
<dbReference type="Pfam" id="PF07155">
    <property type="entry name" value="ECF-ribofla_trS"/>
    <property type="match status" value="1"/>
</dbReference>
<accession>Q5M1F2</accession>
<sequence>MKNNSIRTVVATGIGAALFIIIGMFVNIPIFGNTSIQLQYAVQALFSVIFGPITGFFMGFIGHALKDGIQYGNISWAWVLASGITGLVIGLFGKKYDVTMGKFSVMSMIWFNLAQALGLLIAYGVVTPIGDKIQFAQAWSYLYAQSFVAGVANFITIAIGGTLLLAIYASSRTQSGSLTKD</sequence>
<feature type="chain" id="PRO_0000260816" description="UPF0397 protein str0306">
    <location>
        <begin position="1"/>
        <end position="181"/>
    </location>
</feature>
<feature type="transmembrane region" description="Helical" evidence="1">
    <location>
        <begin position="11"/>
        <end position="31"/>
    </location>
</feature>
<feature type="transmembrane region" description="Helical" evidence="1">
    <location>
        <begin position="45"/>
        <end position="65"/>
    </location>
</feature>
<feature type="transmembrane region" description="Helical" evidence="1">
    <location>
        <begin position="72"/>
        <end position="92"/>
    </location>
</feature>
<feature type="transmembrane region" description="Helical" evidence="1">
    <location>
        <begin position="109"/>
        <end position="129"/>
    </location>
</feature>
<feature type="transmembrane region" description="Helical" evidence="1">
    <location>
        <begin position="147"/>
        <end position="167"/>
    </location>
</feature>
<organism>
    <name type="scientific">Streptococcus thermophilus (strain CNRZ 1066)</name>
    <dbReference type="NCBI Taxonomy" id="299768"/>
    <lineage>
        <taxon>Bacteria</taxon>
        <taxon>Bacillati</taxon>
        <taxon>Bacillota</taxon>
        <taxon>Bacilli</taxon>
        <taxon>Lactobacillales</taxon>
        <taxon>Streptococcaceae</taxon>
        <taxon>Streptococcus</taxon>
    </lineage>
</organism>